<protein>
    <recommendedName>
        <fullName evidence="1">Recombination protein RecR</fullName>
    </recommendedName>
</protein>
<comment type="function">
    <text evidence="1">May play a role in DNA repair. It seems to be involved in an RecBC-independent recombinational process of DNA repair. It may act with RecF and RecO.</text>
</comment>
<comment type="similarity">
    <text evidence="1">Belongs to the RecR family.</text>
</comment>
<keyword id="KW-0227">DNA damage</keyword>
<keyword id="KW-0233">DNA recombination</keyword>
<keyword id="KW-0234">DNA repair</keyword>
<keyword id="KW-0479">Metal-binding</keyword>
<keyword id="KW-0862">Zinc</keyword>
<keyword id="KW-0863">Zinc-finger</keyword>
<organism>
    <name type="scientific">Shewanella sp. (strain ANA-3)</name>
    <dbReference type="NCBI Taxonomy" id="94122"/>
    <lineage>
        <taxon>Bacteria</taxon>
        <taxon>Pseudomonadati</taxon>
        <taxon>Pseudomonadota</taxon>
        <taxon>Gammaproteobacteria</taxon>
        <taxon>Alteromonadales</taxon>
        <taxon>Shewanellaceae</taxon>
        <taxon>Shewanella</taxon>
    </lineage>
</organism>
<gene>
    <name evidence="1" type="primary">recR</name>
    <name type="ordered locus">Shewana3_2444</name>
</gene>
<sequence>MKFSPLLDELIQSLRCLPGVGPKSAQRMAFQLLERDRKAGLKLASALSSAMSDIGHCQSCRTYTEESLCPICSSHKRGSSSTICVVETPADVLAIEAGGHFTGRYFVLLGHLSPLDGVGPEELGLALLERHLASGDVAELILATNPTVEGEATAHFIADMARRHKVVISRIAHGVPVGGELEYVDSTTLALSFNGRIPL</sequence>
<name>RECR_SHESA</name>
<reference key="1">
    <citation type="submission" date="2006-09" db="EMBL/GenBank/DDBJ databases">
        <title>Complete sequence of chromosome 1 of Shewanella sp. ANA-3.</title>
        <authorList>
            <person name="Copeland A."/>
            <person name="Lucas S."/>
            <person name="Lapidus A."/>
            <person name="Barry K."/>
            <person name="Detter J.C."/>
            <person name="Glavina del Rio T."/>
            <person name="Hammon N."/>
            <person name="Israni S."/>
            <person name="Dalin E."/>
            <person name="Tice H."/>
            <person name="Pitluck S."/>
            <person name="Chertkov O."/>
            <person name="Brettin T."/>
            <person name="Bruce D."/>
            <person name="Han C."/>
            <person name="Tapia R."/>
            <person name="Gilna P."/>
            <person name="Schmutz J."/>
            <person name="Larimer F."/>
            <person name="Land M."/>
            <person name="Hauser L."/>
            <person name="Kyrpides N."/>
            <person name="Kim E."/>
            <person name="Newman D."/>
            <person name="Salticov C."/>
            <person name="Konstantinidis K."/>
            <person name="Klappenback J."/>
            <person name="Tiedje J."/>
            <person name="Richardson P."/>
        </authorList>
    </citation>
    <scope>NUCLEOTIDE SEQUENCE [LARGE SCALE GENOMIC DNA]</scope>
    <source>
        <strain>ANA-3</strain>
    </source>
</reference>
<dbReference type="EMBL" id="CP000469">
    <property type="protein sequence ID" value="ABK48673.1"/>
    <property type="molecule type" value="Genomic_DNA"/>
</dbReference>
<dbReference type="RefSeq" id="WP_011717371.1">
    <property type="nucleotide sequence ID" value="NC_008577.1"/>
</dbReference>
<dbReference type="SMR" id="A0KY04"/>
<dbReference type="STRING" id="94122.Shewana3_2444"/>
<dbReference type="KEGG" id="shn:Shewana3_2444"/>
<dbReference type="eggNOG" id="COG0353">
    <property type="taxonomic scope" value="Bacteria"/>
</dbReference>
<dbReference type="HOGENOM" id="CLU_060739_1_2_6"/>
<dbReference type="OrthoDB" id="9802672at2"/>
<dbReference type="Proteomes" id="UP000002589">
    <property type="component" value="Chromosome"/>
</dbReference>
<dbReference type="GO" id="GO:0003677">
    <property type="term" value="F:DNA binding"/>
    <property type="evidence" value="ECO:0007669"/>
    <property type="project" value="UniProtKB-UniRule"/>
</dbReference>
<dbReference type="GO" id="GO:0008270">
    <property type="term" value="F:zinc ion binding"/>
    <property type="evidence" value="ECO:0007669"/>
    <property type="project" value="UniProtKB-KW"/>
</dbReference>
<dbReference type="GO" id="GO:0006310">
    <property type="term" value="P:DNA recombination"/>
    <property type="evidence" value="ECO:0007669"/>
    <property type="project" value="UniProtKB-UniRule"/>
</dbReference>
<dbReference type="GO" id="GO:0006281">
    <property type="term" value="P:DNA repair"/>
    <property type="evidence" value="ECO:0007669"/>
    <property type="project" value="UniProtKB-UniRule"/>
</dbReference>
<dbReference type="CDD" id="cd01025">
    <property type="entry name" value="TOPRIM_recR"/>
    <property type="match status" value="1"/>
</dbReference>
<dbReference type="FunFam" id="1.10.8.420:FF:000001">
    <property type="entry name" value="Recombination protein RecR"/>
    <property type="match status" value="1"/>
</dbReference>
<dbReference type="FunFam" id="3.40.1360.10:FF:000001">
    <property type="entry name" value="Recombination protein RecR"/>
    <property type="match status" value="1"/>
</dbReference>
<dbReference type="Gene3D" id="3.40.1360.10">
    <property type="match status" value="1"/>
</dbReference>
<dbReference type="Gene3D" id="6.10.250.240">
    <property type="match status" value="1"/>
</dbReference>
<dbReference type="Gene3D" id="1.10.8.420">
    <property type="entry name" value="RecR Domain 1"/>
    <property type="match status" value="1"/>
</dbReference>
<dbReference type="HAMAP" id="MF_00017">
    <property type="entry name" value="RecR"/>
    <property type="match status" value="1"/>
</dbReference>
<dbReference type="InterPro" id="IPR000093">
    <property type="entry name" value="DNA_Rcmb_RecR"/>
</dbReference>
<dbReference type="InterPro" id="IPR023627">
    <property type="entry name" value="Rcmb_RecR"/>
</dbReference>
<dbReference type="InterPro" id="IPR015967">
    <property type="entry name" value="Rcmb_RecR_Znf"/>
</dbReference>
<dbReference type="InterPro" id="IPR006171">
    <property type="entry name" value="TOPRIM_dom"/>
</dbReference>
<dbReference type="InterPro" id="IPR034137">
    <property type="entry name" value="TOPRIM_RecR"/>
</dbReference>
<dbReference type="NCBIfam" id="TIGR00615">
    <property type="entry name" value="recR"/>
    <property type="match status" value="1"/>
</dbReference>
<dbReference type="PANTHER" id="PTHR30446">
    <property type="entry name" value="RECOMBINATION PROTEIN RECR"/>
    <property type="match status" value="1"/>
</dbReference>
<dbReference type="PANTHER" id="PTHR30446:SF0">
    <property type="entry name" value="RECOMBINATION PROTEIN RECR"/>
    <property type="match status" value="1"/>
</dbReference>
<dbReference type="Pfam" id="PF21175">
    <property type="entry name" value="RecR_C"/>
    <property type="match status" value="1"/>
</dbReference>
<dbReference type="Pfam" id="PF21176">
    <property type="entry name" value="RecR_HhH"/>
    <property type="match status" value="1"/>
</dbReference>
<dbReference type="Pfam" id="PF02132">
    <property type="entry name" value="RecR_ZnF"/>
    <property type="match status" value="1"/>
</dbReference>
<dbReference type="Pfam" id="PF13662">
    <property type="entry name" value="Toprim_4"/>
    <property type="match status" value="1"/>
</dbReference>
<dbReference type="SMART" id="SM00493">
    <property type="entry name" value="TOPRIM"/>
    <property type="match status" value="1"/>
</dbReference>
<dbReference type="SUPFAM" id="SSF111304">
    <property type="entry name" value="Recombination protein RecR"/>
    <property type="match status" value="1"/>
</dbReference>
<dbReference type="PROSITE" id="PS50880">
    <property type="entry name" value="TOPRIM"/>
    <property type="match status" value="1"/>
</dbReference>
<feature type="chain" id="PRO_1000001607" description="Recombination protein RecR">
    <location>
        <begin position="1"/>
        <end position="199"/>
    </location>
</feature>
<feature type="domain" description="Toprim" evidence="1">
    <location>
        <begin position="81"/>
        <end position="176"/>
    </location>
</feature>
<feature type="zinc finger region" description="C4-type" evidence="1">
    <location>
        <begin position="57"/>
        <end position="72"/>
    </location>
</feature>
<proteinExistence type="inferred from homology"/>
<accession>A0KY04</accession>
<evidence type="ECO:0000255" key="1">
    <source>
        <dbReference type="HAMAP-Rule" id="MF_00017"/>
    </source>
</evidence>